<sequence>MPRERGEKVVATNRKARHDYTIESTYEAGLVLTGTEVKSLRQGRASLVDGYAFVDAGEAWLDAVHIPEYNQGTWNNHPVRRKRKLLLHKEQILKIHSKVKEGGYTVVPLQLYFVDGRAKVELAIAKGKKEYDKRQTLRERQDKREADRAMSSHRRLGE</sequence>
<gene>
    <name evidence="1" type="primary">smpB</name>
    <name type="ordered locus">CMS2083</name>
</gene>
<dbReference type="EMBL" id="AM849034">
    <property type="protein sequence ID" value="CAQ02179.1"/>
    <property type="molecule type" value="Genomic_DNA"/>
</dbReference>
<dbReference type="RefSeq" id="WP_012037997.1">
    <property type="nucleotide sequence ID" value="NZ_MZMN01000003.1"/>
</dbReference>
<dbReference type="SMR" id="B0RF94"/>
<dbReference type="STRING" id="31964.CMS2083"/>
<dbReference type="GeneID" id="92947281"/>
<dbReference type="KEGG" id="cms:CMS2083"/>
<dbReference type="eggNOG" id="COG0691">
    <property type="taxonomic scope" value="Bacteria"/>
</dbReference>
<dbReference type="HOGENOM" id="CLU_108953_2_1_11"/>
<dbReference type="OrthoDB" id="9805462at2"/>
<dbReference type="Proteomes" id="UP000001318">
    <property type="component" value="Chromosome"/>
</dbReference>
<dbReference type="GO" id="GO:0005829">
    <property type="term" value="C:cytosol"/>
    <property type="evidence" value="ECO:0007669"/>
    <property type="project" value="TreeGrafter"/>
</dbReference>
<dbReference type="GO" id="GO:0003723">
    <property type="term" value="F:RNA binding"/>
    <property type="evidence" value="ECO:0007669"/>
    <property type="project" value="UniProtKB-UniRule"/>
</dbReference>
<dbReference type="GO" id="GO:0070929">
    <property type="term" value="P:trans-translation"/>
    <property type="evidence" value="ECO:0007669"/>
    <property type="project" value="UniProtKB-UniRule"/>
</dbReference>
<dbReference type="CDD" id="cd09294">
    <property type="entry name" value="SmpB"/>
    <property type="match status" value="1"/>
</dbReference>
<dbReference type="Gene3D" id="2.40.280.10">
    <property type="match status" value="1"/>
</dbReference>
<dbReference type="HAMAP" id="MF_00023">
    <property type="entry name" value="SmpB"/>
    <property type="match status" value="1"/>
</dbReference>
<dbReference type="InterPro" id="IPR023620">
    <property type="entry name" value="SmpB"/>
</dbReference>
<dbReference type="InterPro" id="IPR000037">
    <property type="entry name" value="SsrA-bd_prot"/>
</dbReference>
<dbReference type="InterPro" id="IPR020081">
    <property type="entry name" value="SsrA-bd_prot_CS"/>
</dbReference>
<dbReference type="NCBIfam" id="NF003843">
    <property type="entry name" value="PRK05422.1"/>
    <property type="match status" value="1"/>
</dbReference>
<dbReference type="NCBIfam" id="TIGR00086">
    <property type="entry name" value="smpB"/>
    <property type="match status" value="1"/>
</dbReference>
<dbReference type="PANTHER" id="PTHR30308:SF2">
    <property type="entry name" value="SSRA-BINDING PROTEIN"/>
    <property type="match status" value="1"/>
</dbReference>
<dbReference type="PANTHER" id="PTHR30308">
    <property type="entry name" value="TMRNA-BINDING COMPONENT OF TRANS-TRANSLATION TAGGING COMPLEX"/>
    <property type="match status" value="1"/>
</dbReference>
<dbReference type="Pfam" id="PF01668">
    <property type="entry name" value="SmpB"/>
    <property type="match status" value="1"/>
</dbReference>
<dbReference type="SUPFAM" id="SSF74982">
    <property type="entry name" value="Small protein B (SmpB)"/>
    <property type="match status" value="1"/>
</dbReference>
<dbReference type="PROSITE" id="PS01317">
    <property type="entry name" value="SSRP"/>
    <property type="match status" value="1"/>
</dbReference>
<name>SSRP_CLASE</name>
<feature type="chain" id="PRO_1000074346" description="SsrA-binding protein">
    <location>
        <begin position="1"/>
        <end position="158"/>
    </location>
</feature>
<feature type="region of interest" description="Disordered" evidence="2">
    <location>
        <begin position="131"/>
        <end position="158"/>
    </location>
</feature>
<evidence type="ECO:0000255" key="1">
    <source>
        <dbReference type="HAMAP-Rule" id="MF_00023"/>
    </source>
</evidence>
<evidence type="ECO:0000256" key="2">
    <source>
        <dbReference type="SAM" id="MobiDB-lite"/>
    </source>
</evidence>
<protein>
    <recommendedName>
        <fullName evidence="1">SsrA-binding protein</fullName>
    </recommendedName>
    <alternativeName>
        <fullName evidence="1">Small protein B</fullName>
    </alternativeName>
</protein>
<keyword id="KW-0963">Cytoplasm</keyword>
<keyword id="KW-0694">RNA-binding</keyword>
<reference key="1">
    <citation type="journal article" date="2008" name="J. Bacteriol.">
        <title>Genome of the actinomycete plant pathogen Clavibacter michiganensis subsp. sepedonicus suggests recent niche adaptation.</title>
        <authorList>
            <person name="Bentley S.D."/>
            <person name="Corton C."/>
            <person name="Brown S.E."/>
            <person name="Barron A."/>
            <person name="Clark L."/>
            <person name="Doggett J."/>
            <person name="Harris B."/>
            <person name="Ormond D."/>
            <person name="Quail M.A."/>
            <person name="May G."/>
            <person name="Francis D."/>
            <person name="Knudson D."/>
            <person name="Parkhill J."/>
            <person name="Ishimaru C.A."/>
        </authorList>
    </citation>
    <scope>NUCLEOTIDE SEQUENCE [LARGE SCALE GENOMIC DNA]</scope>
    <source>
        <strain>ATCC 33113 / DSM 20744 / JCM 9667 / LMG 2889 / ICMP 2535 / C-1</strain>
    </source>
</reference>
<accession>B0RF94</accession>
<organism>
    <name type="scientific">Clavibacter sepedonicus</name>
    <name type="common">Clavibacter michiganensis subsp. sepedonicus</name>
    <dbReference type="NCBI Taxonomy" id="31964"/>
    <lineage>
        <taxon>Bacteria</taxon>
        <taxon>Bacillati</taxon>
        <taxon>Actinomycetota</taxon>
        <taxon>Actinomycetes</taxon>
        <taxon>Micrococcales</taxon>
        <taxon>Microbacteriaceae</taxon>
        <taxon>Clavibacter</taxon>
    </lineage>
</organism>
<comment type="function">
    <text evidence="1">Required for rescue of stalled ribosomes mediated by trans-translation. Binds to transfer-messenger RNA (tmRNA), required for stable association of tmRNA with ribosomes. tmRNA and SmpB together mimic tRNA shape, replacing the anticodon stem-loop with SmpB. tmRNA is encoded by the ssrA gene; the 2 termini fold to resemble tRNA(Ala) and it encodes a 'tag peptide', a short internal open reading frame. During trans-translation Ala-aminoacylated tmRNA acts like a tRNA, entering the A-site of stalled ribosomes, displacing the stalled mRNA. The ribosome then switches to translate the ORF on the tmRNA; the nascent peptide is terminated with the 'tag peptide' encoded by the tmRNA and targeted for degradation. The ribosome is freed to recommence translation, which seems to be the essential function of trans-translation.</text>
</comment>
<comment type="subcellular location">
    <subcellularLocation>
        <location evidence="1">Cytoplasm</location>
    </subcellularLocation>
    <text evidence="1">The tmRNA-SmpB complex associates with stalled 70S ribosomes.</text>
</comment>
<comment type="similarity">
    <text evidence="1">Belongs to the SmpB family.</text>
</comment>
<proteinExistence type="inferred from homology"/>